<evidence type="ECO:0000255" key="1">
    <source>
        <dbReference type="HAMAP-Rule" id="MF_00600"/>
    </source>
</evidence>
<sequence>MAAKHVLFSTDARQKMLSGVNLLANAVKVTLGPKGRHVVLNKSYGAPTITKDGVSVAKEIELADKFENMGAQMLKQVASKANDEAGDGTTTATVLAQALINEGMKAVAAGMNPMDLKRGIDKAVSAAVEKLHQLAKPCSDTQSITQVGAISANSDHAIGEIIAQAMEKVGRNGVITVEEGQALQNELSVVEGMQFDRGYLSPYFINQPKAGCVELENPYVLLVDKKISHIRELLPILESVAKASRSLLIIAEDVDGDALATLVVNSMRGIIKVAAVKAPGFGEQRKAMLEDIAALTAGRVISEEIGLELEKVTLDDLGSAKKVTINKDNTTIVDGAAEPSALQDRIAQIQHQLEHTTSQYDRDKLQQRIAKLSGGVAVIKIGAATEVEMKEKKDRVDDALHATRAAVEEGIVAGGGVALLKIANELSNLQGDNDDQNVGIRIALRAMEEPLRQIAINAGDEASVIANQVKTGDEHYGYNAATGQFGNMLEMGILDPAKVTRSALQFAASIAGLMITTEAMVSEVDKESAA</sequence>
<proteinExistence type="inferred from homology"/>
<accession>A5F0I2</accession>
<accession>C3M6B4</accession>
<gene>
    <name evidence="1" type="primary">groEL1</name>
    <name evidence="1" type="synonym">groL1</name>
    <name type="ordered locus">VC0395_0414</name>
    <name type="ordered locus">VC395_A0844</name>
</gene>
<keyword id="KW-0067">ATP-binding</keyword>
<keyword id="KW-0143">Chaperone</keyword>
<keyword id="KW-0963">Cytoplasm</keyword>
<keyword id="KW-0413">Isomerase</keyword>
<keyword id="KW-0547">Nucleotide-binding</keyword>
<comment type="function">
    <text evidence="1">Together with its co-chaperonin GroES, plays an essential role in assisting protein folding. The GroEL-GroES system forms a nano-cage that allows encapsulation of the non-native substrate proteins and provides a physical environment optimized to promote and accelerate protein folding.</text>
</comment>
<comment type="catalytic activity">
    <reaction evidence="1">
        <text>ATP + H2O + a folded polypeptide = ADP + phosphate + an unfolded polypeptide.</text>
        <dbReference type="EC" id="5.6.1.7"/>
    </reaction>
</comment>
<comment type="subunit">
    <text evidence="1">Forms a cylinder of 14 subunits composed of two heptameric rings stacked back-to-back. Interacts with the co-chaperonin GroES.</text>
</comment>
<comment type="subcellular location">
    <subcellularLocation>
        <location evidence="1">Cytoplasm</location>
    </subcellularLocation>
</comment>
<comment type="similarity">
    <text evidence="1">Belongs to the chaperonin (HSP60) family.</text>
</comment>
<organism>
    <name type="scientific">Vibrio cholerae serotype O1 (strain ATCC 39541 / Classical Ogawa 395 / O395)</name>
    <dbReference type="NCBI Taxonomy" id="345073"/>
    <lineage>
        <taxon>Bacteria</taxon>
        <taxon>Pseudomonadati</taxon>
        <taxon>Pseudomonadota</taxon>
        <taxon>Gammaproteobacteria</taxon>
        <taxon>Vibrionales</taxon>
        <taxon>Vibrionaceae</taxon>
        <taxon>Vibrio</taxon>
    </lineage>
</organism>
<dbReference type="EC" id="5.6.1.7" evidence="1"/>
<dbReference type="EMBL" id="CP000626">
    <property type="protein sequence ID" value="ABQ19019.1"/>
    <property type="molecule type" value="Genomic_DNA"/>
</dbReference>
<dbReference type="EMBL" id="CP001236">
    <property type="protein sequence ID" value="ACP11677.1"/>
    <property type="molecule type" value="Genomic_DNA"/>
</dbReference>
<dbReference type="SMR" id="A5F0I2"/>
<dbReference type="KEGG" id="vco:VC0395_0414"/>
<dbReference type="KEGG" id="vcr:VC395_A0844"/>
<dbReference type="PATRIC" id="fig|345073.21.peg.3575"/>
<dbReference type="eggNOG" id="COG0459">
    <property type="taxonomic scope" value="Bacteria"/>
</dbReference>
<dbReference type="HOGENOM" id="CLU_016503_3_0_6"/>
<dbReference type="OrthoDB" id="9766614at2"/>
<dbReference type="Proteomes" id="UP000000249">
    <property type="component" value="Chromosome 1"/>
</dbReference>
<dbReference type="GO" id="GO:0005737">
    <property type="term" value="C:cytoplasm"/>
    <property type="evidence" value="ECO:0007669"/>
    <property type="project" value="UniProtKB-SubCell"/>
</dbReference>
<dbReference type="GO" id="GO:0005524">
    <property type="term" value="F:ATP binding"/>
    <property type="evidence" value="ECO:0007669"/>
    <property type="project" value="UniProtKB-UniRule"/>
</dbReference>
<dbReference type="GO" id="GO:0140662">
    <property type="term" value="F:ATP-dependent protein folding chaperone"/>
    <property type="evidence" value="ECO:0007669"/>
    <property type="project" value="InterPro"/>
</dbReference>
<dbReference type="GO" id="GO:0016853">
    <property type="term" value="F:isomerase activity"/>
    <property type="evidence" value="ECO:0007669"/>
    <property type="project" value="UniProtKB-KW"/>
</dbReference>
<dbReference type="GO" id="GO:0051082">
    <property type="term" value="F:unfolded protein binding"/>
    <property type="evidence" value="ECO:0007669"/>
    <property type="project" value="UniProtKB-UniRule"/>
</dbReference>
<dbReference type="GO" id="GO:0042026">
    <property type="term" value="P:protein refolding"/>
    <property type="evidence" value="ECO:0007669"/>
    <property type="project" value="UniProtKB-UniRule"/>
</dbReference>
<dbReference type="CDD" id="cd03344">
    <property type="entry name" value="GroEL"/>
    <property type="match status" value="1"/>
</dbReference>
<dbReference type="FunFam" id="1.10.560.10:FF:000001">
    <property type="entry name" value="60 kDa chaperonin"/>
    <property type="match status" value="1"/>
</dbReference>
<dbReference type="FunFam" id="3.50.7.10:FF:000001">
    <property type="entry name" value="60 kDa chaperonin"/>
    <property type="match status" value="1"/>
</dbReference>
<dbReference type="Gene3D" id="3.50.7.10">
    <property type="entry name" value="GroEL"/>
    <property type="match status" value="1"/>
</dbReference>
<dbReference type="Gene3D" id="1.10.560.10">
    <property type="entry name" value="GroEL-like equatorial domain"/>
    <property type="match status" value="1"/>
</dbReference>
<dbReference type="Gene3D" id="3.30.260.10">
    <property type="entry name" value="TCP-1-like chaperonin intermediate domain"/>
    <property type="match status" value="1"/>
</dbReference>
<dbReference type="HAMAP" id="MF_00600">
    <property type="entry name" value="CH60"/>
    <property type="match status" value="1"/>
</dbReference>
<dbReference type="InterPro" id="IPR018370">
    <property type="entry name" value="Chaperonin_Cpn60_CS"/>
</dbReference>
<dbReference type="InterPro" id="IPR001844">
    <property type="entry name" value="Cpn60/GroEL"/>
</dbReference>
<dbReference type="InterPro" id="IPR002423">
    <property type="entry name" value="Cpn60/GroEL/TCP-1"/>
</dbReference>
<dbReference type="InterPro" id="IPR027409">
    <property type="entry name" value="GroEL-like_apical_dom_sf"/>
</dbReference>
<dbReference type="InterPro" id="IPR027413">
    <property type="entry name" value="GROEL-like_equatorial_sf"/>
</dbReference>
<dbReference type="InterPro" id="IPR027410">
    <property type="entry name" value="TCP-1-like_intermed_sf"/>
</dbReference>
<dbReference type="NCBIfam" id="TIGR02348">
    <property type="entry name" value="GroEL"/>
    <property type="match status" value="1"/>
</dbReference>
<dbReference type="NCBIfam" id="NF000592">
    <property type="entry name" value="PRK00013.1"/>
    <property type="match status" value="1"/>
</dbReference>
<dbReference type="NCBIfam" id="NF009487">
    <property type="entry name" value="PRK12849.1"/>
    <property type="match status" value="1"/>
</dbReference>
<dbReference type="NCBIfam" id="NF009488">
    <property type="entry name" value="PRK12850.1"/>
    <property type="match status" value="1"/>
</dbReference>
<dbReference type="NCBIfam" id="NF009489">
    <property type="entry name" value="PRK12851.1"/>
    <property type="match status" value="1"/>
</dbReference>
<dbReference type="PANTHER" id="PTHR45633">
    <property type="entry name" value="60 KDA HEAT SHOCK PROTEIN, MITOCHONDRIAL"/>
    <property type="match status" value="1"/>
</dbReference>
<dbReference type="Pfam" id="PF00118">
    <property type="entry name" value="Cpn60_TCP1"/>
    <property type="match status" value="1"/>
</dbReference>
<dbReference type="PRINTS" id="PR00298">
    <property type="entry name" value="CHAPERONIN60"/>
</dbReference>
<dbReference type="SUPFAM" id="SSF52029">
    <property type="entry name" value="GroEL apical domain-like"/>
    <property type="match status" value="1"/>
</dbReference>
<dbReference type="SUPFAM" id="SSF48592">
    <property type="entry name" value="GroEL equatorial domain-like"/>
    <property type="match status" value="1"/>
</dbReference>
<dbReference type="SUPFAM" id="SSF54849">
    <property type="entry name" value="GroEL-intermediate domain like"/>
    <property type="match status" value="1"/>
</dbReference>
<dbReference type="PROSITE" id="PS00296">
    <property type="entry name" value="CHAPERONINS_CPN60"/>
    <property type="match status" value="1"/>
</dbReference>
<name>CH601_VIBC3</name>
<feature type="chain" id="PRO_0000332099" description="Chaperonin GroEL 1">
    <location>
        <begin position="1"/>
        <end position="530"/>
    </location>
</feature>
<feature type="binding site" evidence="1">
    <location>
        <begin position="30"/>
        <end position="33"/>
    </location>
    <ligand>
        <name>ATP</name>
        <dbReference type="ChEBI" id="CHEBI:30616"/>
    </ligand>
</feature>
<feature type="binding site" evidence="1">
    <location>
        <position position="51"/>
    </location>
    <ligand>
        <name>ATP</name>
        <dbReference type="ChEBI" id="CHEBI:30616"/>
    </ligand>
</feature>
<feature type="binding site" evidence="1">
    <location>
        <begin position="87"/>
        <end position="91"/>
    </location>
    <ligand>
        <name>ATP</name>
        <dbReference type="ChEBI" id="CHEBI:30616"/>
    </ligand>
</feature>
<feature type="binding site" evidence="1">
    <location>
        <position position="415"/>
    </location>
    <ligand>
        <name>ATP</name>
        <dbReference type="ChEBI" id="CHEBI:30616"/>
    </ligand>
</feature>
<feature type="binding site" evidence="1">
    <location>
        <begin position="479"/>
        <end position="481"/>
    </location>
    <ligand>
        <name>ATP</name>
        <dbReference type="ChEBI" id="CHEBI:30616"/>
    </ligand>
</feature>
<feature type="binding site" evidence="1">
    <location>
        <position position="495"/>
    </location>
    <ligand>
        <name>ATP</name>
        <dbReference type="ChEBI" id="CHEBI:30616"/>
    </ligand>
</feature>
<protein>
    <recommendedName>
        <fullName evidence="1">Chaperonin GroEL 1</fullName>
        <ecNumber evidence="1">5.6.1.7</ecNumber>
    </recommendedName>
    <alternativeName>
        <fullName evidence="1">60 kDa chaperonin 1</fullName>
    </alternativeName>
    <alternativeName>
        <fullName evidence="1">Chaperonin-60 1</fullName>
        <shortName evidence="1">Cpn60 1</shortName>
    </alternativeName>
</protein>
<reference key="1">
    <citation type="submission" date="2007-03" db="EMBL/GenBank/DDBJ databases">
        <authorList>
            <person name="Heidelberg J."/>
        </authorList>
    </citation>
    <scope>NUCLEOTIDE SEQUENCE [LARGE SCALE GENOMIC DNA]</scope>
    <source>
        <strain>ATCC 39541 / Classical Ogawa 395 / O395</strain>
    </source>
</reference>
<reference key="2">
    <citation type="journal article" date="2008" name="PLoS ONE">
        <title>A recalibrated molecular clock and independent origins for the cholera pandemic clones.</title>
        <authorList>
            <person name="Feng L."/>
            <person name="Reeves P.R."/>
            <person name="Lan R."/>
            <person name="Ren Y."/>
            <person name="Gao C."/>
            <person name="Zhou Z."/>
            <person name="Ren Y."/>
            <person name="Cheng J."/>
            <person name="Wang W."/>
            <person name="Wang J."/>
            <person name="Qian W."/>
            <person name="Li D."/>
            <person name="Wang L."/>
        </authorList>
    </citation>
    <scope>NUCLEOTIDE SEQUENCE [LARGE SCALE GENOMIC DNA]</scope>
    <source>
        <strain>ATCC 39541 / Classical Ogawa 395 / O395</strain>
    </source>
</reference>